<keyword id="KW-0687">Ribonucleoprotein</keyword>
<keyword id="KW-0689">Ribosomal protein</keyword>
<reference key="1">
    <citation type="journal article" date="2011" name="J. Bacteriol.">
        <title>Comparative genomics of 28 Salmonella enterica isolates: evidence for CRISPR-mediated adaptive sublineage evolution.</title>
        <authorList>
            <person name="Fricke W.F."/>
            <person name="Mammel M.K."/>
            <person name="McDermott P.F."/>
            <person name="Tartera C."/>
            <person name="White D.G."/>
            <person name="Leclerc J.E."/>
            <person name="Ravel J."/>
            <person name="Cebula T.A."/>
        </authorList>
    </citation>
    <scope>NUCLEOTIDE SEQUENCE [LARGE SCALE GENOMIC DNA]</scope>
    <source>
        <strain>SL254</strain>
    </source>
</reference>
<comment type="similarity">
    <text evidence="1">Belongs to the bacterial ribosomal protein bL34 family.</text>
</comment>
<accession>B4SYA9</accession>
<dbReference type="EMBL" id="CP001113">
    <property type="protein sequence ID" value="ACF61144.1"/>
    <property type="molecule type" value="Genomic_DNA"/>
</dbReference>
<dbReference type="RefSeq" id="WP_000831330.1">
    <property type="nucleotide sequence ID" value="NZ_CCMR01000001.1"/>
</dbReference>
<dbReference type="SMR" id="B4SYA9"/>
<dbReference type="GeneID" id="98190980"/>
<dbReference type="KEGG" id="see:SNSL254_A4124"/>
<dbReference type="HOGENOM" id="CLU_129938_2_1_6"/>
<dbReference type="Proteomes" id="UP000008824">
    <property type="component" value="Chromosome"/>
</dbReference>
<dbReference type="GO" id="GO:1990904">
    <property type="term" value="C:ribonucleoprotein complex"/>
    <property type="evidence" value="ECO:0007669"/>
    <property type="project" value="UniProtKB-KW"/>
</dbReference>
<dbReference type="GO" id="GO:0005840">
    <property type="term" value="C:ribosome"/>
    <property type="evidence" value="ECO:0007669"/>
    <property type="project" value="UniProtKB-KW"/>
</dbReference>
<dbReference type="GO" id="GO:0003735">
    <property type="term" value="F:structural constituent of ribosome"/>
    <property type="evidence" value="ECO:0007669"/>
    <property type="project" value="InterPro"/>
</dbReference>
<dbReference type="GO" id="GO:0006412">
    <property type="term" value="P:translation"/>
    <property type="evidence" value="ECO:0007669"/>
    <property type="project" value="UniProtKB-UniRule"/>
</dbReference>
<dbReference type="FunFam" id="1.10.287.3980:FF:000001">
    <property type="entry name" value="Mitochondrial ribosomal protein L34"/>
    <property type="match status" value="1"/>
</dbReference>
<dbReference type="Gene3D" id="1.10.287.3980">
    <property type="match status" value="1"/>
</dbReference>
<dbReference type="HAMAP" id="MF_00391">
    <property type="entry name" value="Ribosomal_bL34"/>
    <property type="match status" value="1"/>
</dbReference>
<dbReference type="InterPro" id="IPR000271">
    <property type="entry name" value="Ribosomal_bL34"/>
</dbReference>
<dbReference type="InterPro" id="IPR020939">
    <property type="entry name" value="Ribosomal_bL34_CS"/>
</dbReference>
<dbReference type="NCBIfam" id="TIGR01030">
    <property type="entry name" value="rpmH_bact"/>
    <property type="match status" value="1"/>
</dbReference>
<dbReference type="PANTHER" id="PTHR14503:SF4">
    <property type="entry name" value="LARGE RIBOSOMAL SUBUNIT PROTEIN BL34M"/>
    <property type="match status" value="1"/>
</dbReference>
<dbReference type="PANTHER" id="PTHR14503">
    <property type="entry name" value="MITOCHONDRIAL RIBOSOMAL PROTEIN 34 FAMILY MEMBER"/>
    <property type="match status" value="1"/>
</dbReference>
<dbReference type="Pfam" id="PF00468">
    <property type="entry name" value="Ribosomal_L34"/>
    <property type="match status" value="1"/>
</dbReference>
<dbReference type="PROSITE" id="PS00784">
    <property type="entry name" value="RIBOSOMAL_L34"/>
    <property type="match status" value="1"/>
</dbReference>
<proteinExistence type="inferred from homology"/>
<gene>
    <name evidence="1" type="primary">rpmH</name>
    <name type="ordered locus">SNSL254_A4124</name>
</gene>
<sequence>MKRTFQPSVLKRNRSHGFRARMATKNGRQVLARRRAKGRARLTVSK</sequence>
<protein>
    <recommendedName>
        <fullName evidence="1">Large ribosomal subunit protein bL34</fullName>
    </recommendedName>
    <alternativeName>
        <fullName evidence="2">50S ribosomal protein L34</fullName>
    </alternativeName>
</protein>
<name>RL34_SALNS</name>
<evidence type="ECO:0000255" key="1">
    <source>
        <dbReference type="HAMAP-Rule" id="MF_00391"/>
    </source>
</evidence>
<evidence type="ECO:0000305" key="2"/>
<feature type="chain" id="PRO_1000196104" description="Large ribosomal subunit protein bL34">
    <location>
        <begin position="1"/>
        <end position="46"/>
    </location>
</feature>
<organism>
    <name type="scientific">Salmonella newport (strain SL254)</name>
    <dbReference type="NCBI Taxonomy" id="423368"/>
    <lineage>
        <taxon>Bacteria</taxon>
        <taxon>Pseudomonadati</taxon>
        <taxon>Pseudomonadota</taxon>
        <taxon>Gammaproteobacteria</taxon>
        <taxon>Enterobacterales</taxon>
        <taxon>Enterobacteriaceae</taxon>
        <taxon>Salmonella</taxon>
    </lineage>
</organism>